<reference key="1">
    <citation type="journal article" date="2004" name="Genome Res.">
        <title>Genome sequence of Haloarcula marismortui: a halophilic archaeon from the Dead Sea.</title>
        <authorList>
            <person name="Baliga N.S."/>
            <person name="Bonneau R."/>
            <person name="Facciotti M.T."/>
            <person name="Pan M."/>
            <person name="Glusman G."/>
            <person name="Deutsch E.W."/>
            <person name="Shannon P."/>
            <person name="Chiu Y."/>
            <person name="Weng R.S."/>
            <person name="Gan R.R."/>
            <person name="Hung P."/>
            <person name="Date S.V."/>
            <person name="Marcotte E."/>
            <person name="Hood L."/>
            <person name="Ng W.V."/>
        </authorList>
    </citation>
    <scope>NUCLEOTIDE SEQUENCE [LARGE SCALE GENOMIC DNA]</scope>
    <source>
        <strain>ATCC 43049 / DSM 3752 / JCM 8966 / VKM B-1809</strain>
    </source>
</reference>
<proteinExistence type="inferred from homology"/>
<accession>Q5UXT4</accession>
<sequence>MRFGVDEAGKGPVLGSMFAAAVRADPAALPGGVGDSKDIRPERRERLAKEIRESADAVGIAEISVERIDADETDMNTLTVEGQAEALSAVARDGLSGTVDAGDTDAARFGRRVADAVDTDVAVTAEHGADETDSLVGAASIIAKVARDTHVAELAAEYGDVGSGYPSDPTTRTFLADYVDRHGELPACARRSWSTCDDVLAAASQSTLSDF</sequence>
<organism>
    <name type="scientific">Haloarcula marismortui (strain ATCC 43049 / DSM 3752 / JCM 8966 / VKM B-1809)</name>
    <name type="common">Halobacterium marismortui</name>
    <dbReference type="NCBI Taxonomy" id="272569"/>
    <lineage>
        <taxon>Archaea</taxon>
        <taxon>Methanobacteriati</taxon>
        <taxon>Methanobacteriota</taxon>
        <taxon>Stenosarchaea group</taxon>
        <taxon>Halobacteria</taxon>
        <taxon>Halobacteriales</taxon>
        <taxon>Haloarculaceae</taxon>
        <taxon>Haloarcula</taxon>
    </lineage>
</organism>
<gene>
    <name evidence="1" type="primary">rnhB</name>
    <name type="ordered locus">rrnAC3216</name>
</gene>
<protein>
    <recommendedName>
        <fullName evidence="1">Ribonuclease HII</fullName>
        <shortName evidence="1">RNase HII</shortName>
        <ecNumber evidence="1">3.1.26.4</ecNumber>
    </recommendedName>
</protein>
<comment type="function">
    <text evidence="1">Endonuclease that specifically degrades the RNA of RNA-DNA hybrids.</text>
</comment>
<comment type="catalytic activity">
    <reaction evidence="1">
        <text>Endonucleolytic cleavage to 5'-phosphomonoester.</text>
        <dbReference type="EC" id="3.1.26.4"/>
    </reaction>
</comment>
<comment type="cofactor">
    <cofactor evidence="1">
        <name>Mn(2+)</name>
        <dbReference type="ChEBI" id="CHEBI:29035"/>
    </cofactor>
    <cofactor evidence="1">
        <name>Mg(2+)</name>
        <dbReference type="ChEBI" id="CHEBI:18420"/>
    </cofactor>
    <text evidence="1">Manganese or magnesium. Binds 1 divalent metal ion per monomer in the absence of substrate. May bind a second metal ion after substrate binding.</text>
</comment>
<comment type="subcellular location">
    <subcellularLocation>
        <location evidence="1">Cytoplasm</location>
    </subcellularLocation>
</comment>
<comment type="similarity">
    <text evidence="1">Belongs to the RNase HII family.</text>
</comment>
<evidence type="ECO:0000255" key="1">
    <source>
        <dbReference type="HAMAP-Rule" id="MF_00052"/>
    </source>
</evidence>
<evidence type="ECO:0000255" key="2">
    <source>
        <dbReference type="PROSITE-ProRule" id="PRU01319"/>
    </source>
</evidence>
<feature type="chain" id="PRO_0000236277" description="Ribonuclease HII">
    <location>
        <begin position="1"/>
        <end position="211"/>
    </location>
</feature>
<feature type="domain" description="RNase H type-2" evidence="2">
    <location>
        <begin position="1"/>
        <end position="205"/>
    </location>
</feature>
<feature type="binding site" evidence="1">
    <location>
        <position position="6"/>
    </location>
    <ligand>
        <name>a divalent metal cation</name>
        <dbReference type="ChEBI" id="CHEBI:60240"/>
    </ligand>
</feature>
<feature type="binding site" evidence="1">
    <location>
        <position position="7"/>
    </location>
    <ligand>
        <name>a divalent metal cation</name>
        <dbReference type="ChEBI" id="CHEBI:60240"/>
    </ligand>
</feature>
<feature type="binding site" evidence="1">
    <location>
        <position position="100"/>
    </location>
    <ligand>
        <name>a divalent metal cation</name>
        <dbReference type="ChEBI" id="CHEBI:60240"/>
    </ligand>
</feature>
<dbReference type="EC" id="3.1.26.4" evidence="1"/>
<dbReference type="EMBL" id="AY596297">
    <property type="protein sequence ID" value="AAV47919.1"/>
    <property type="molecule type" value="Genomic_DNA"/>
</dbReference>
<dbReference type="RefSeq" id="WP_011224676.1">
    <property type="nucleotide sequence ID" value="NZ_CP039138.1"/>
</dbReference>
<dbReference type="SMR" id="Q5UXT4"/>
<dbReference type="STRING" id="272569.rrnAC3216"/>
<dbReference type="PaxDb" id="272569-rrnAC3216"/>
<dbReference type="EnsemblBacteria" id="AAV47919">
    <property type="protein sequence ID" value="AAV47919"/>
    <property type="gene ID" value="rrnAC3216"/>
</dbReference>
<dbReference type="GeneID" id="40154019"/>
<dbReference type="KEGG" id="hma:rrnAC3216"/>
<dbReference type="PATRIC" id="fig|272569.17.peg.3753"/>
<dbReference type="eggNOG" id="arCOG04121">
    <property type="taxonomic scope" value="Archaea"/>
</dbReference>
<dbReference type="HOGENOM" id="CLU_036532_0_4_2"/>
<dbReference type="Proteomes" id="UP000001169">
    <property type="component" value="Chromosome I"/>
</dbReference>
<dbReference type="GO" id="GO:0005737">
    <property type="term" value="C:cytoplasm"/>
    <property type="evidence" value="ECO:0007669"/>
    <property type="project" value="UniProtKB-SubCell"/>
</dbReference>
<dbReference type="GO" id="GO:0032299">
    <property type="term" value="C:ribonuclease H2 complex"/>
    <property type="evidence" value="ECO:0007669"/>
    <property type="project" value="TreeGrafter"/>
</dbReference>
<dbReference type="GO" id="GO:0030145">
    <property type="term" value="F:manganese ion binding"/>
    <property type="evidence" value="ECO:0007669"/>
    <property type="project" value="UniProtKB-UniRule"/>
</dbReference>
<dbReference type="GO" id="GO:0003723">
    <property type="term" value="F:RNA binding"/>
    <property type="evidence" value="ECO:0007669"/>
    <property type="project" value="InterPro"/>
</dbReference>
<dbReference type="GO" id="GO:0004523">
    <property type="term" value="F:RNA-DNA hybrid ribonuclease activity"/>
    <property type="evidence" value="ECO:0007669"/>
    <property type="project" value="UniProtKB-UniRule"/>
</dbReference>
<dbReference type="GO" id="GO:0043137">
    <property type="term" value="P:DNA replication, removal of RNA primer"/>
    <property type="evidence" value="ECO:0007669"/>
    <property type="project" value="TreeGrafter"/>
</dbReference>
<dbReference type="GO" id="GO:0006298">
    <property type="term" value="P:mismatch repair"/>
    <property type="evidence" value="ECO:0007669"/>
    <property type="project" value="TreeGrafter"/>
</dbReference>
<dbReference type="CDD" id="cd07180">
    <property type="entry name" value="RNase_HII_archaea_like"/>
    <property type="match status" value="1"/>
</dbReference>
<dbReference type="FunFam" id="1.10.10.460:FF:000001">
    <property type="entry name" value="Ribonuclease"/>
    <property type="match status" value="1"/>
</dbReference>
<dbReference type="Gene3D" id="3.30.420.10">
    <property type="entry name" value="Ribonuclease H-like superfamily/Ribonuclease H"/>
    <property type="match status" value="1"/>
</dbReference>
<dbReference type="Gene3D" id="1.10.10.460">
    <property type="entry name" value="Ribonuclease hii. Domain 2"/>
    <property type="match status" value="1"/>
</dbReference>
<dbReference type="HAMAP" id="MF_00052_A">
    <property type="entry name" value="RNase_HII_A"/>
    <property type="match status" value="1"/>
</dbReference>
<dbReference type="InterPro" id="IPR004649">
    <property type="entry name" value="RNase_H2_suA"/>
</dbReference>
<dbReference type="InterPro" id="IPR001352">
    <property type="entry name" value="RNase_HII/HIII"/>
</dbReference>
<dbReference type="InterPro" id="IPR024567">
    <property type="entry name" value="RNase_HII/HIII_dom"/>
</dbReference>
<dbReference type="InterPro" id="IPR020787">
    <property type="entry name" value="RNase_HII_arc"/>
</dbReference>
<dbReference type="InterPro" id="IPR023160">
    <property type="entry name" value="RNase_HII_hlx-loop-hlx_cap_dom"/>
</dbReference>
<dbReference type="InterPro" id="IPR012337">
    <property type="entry name" value="RNaseH-like_sf"/>
</dbReference>
<dbReference type="InterPro" id="IPR036397">
    <property type="entry name" value="RNaseH_sf"/>
</dbReference>
<dbReference type="NCBIfam" id="TIGR00729">
    <property type="entry name" value="ribonuclease HII"/>
    <property type="match status" value="1"/>
</dbReference>
<dbReference type="PANTHER" id="PTHR10954:SF23">
    <property type="entry name" value="RIBONUCLEASE"/>
    <property type="match status" value="1"/>
</dbReference>
<dbReference type="PANTHER" id="PTHR10954">
    <property type="entry name" value="RIBONUCLEASE H2 SUBUNIT A"/>
    <property type="match status" value="1"/>
</dbReference>
<dbReference type="Pfam" id="PF01351">
    <property type="entry name" value="RNase_HII"/>
    <property type="match status" value="1"/>
</dbReference>
<dbReference type="SUPFAM" id="SSF53098">
    <property type="entry name" value="Ribonuclease H-like"/>
    <property type="match status" value="1"/>
</dbReference>
<dbReference type="PROSITE" id="PS51975">
    <property type="entry name" value="RNASE_H_2"/>
    <property type="match status" value="1"/>
</dbReference>
<name>RNH2_HALMA</name>
<keyword id="KW-0963">Cytoplasm</keyword>
<keyword id="KW-0255">Endonuclease</keyword>
<keyword id="KW-0378">Hydrolase</keyword>
<keyword id="KW-0464">Manganese</keyword>
<keyword id="KW-0479">Metal-binding</keyword>
<keyword id="KW-0540">Nuclease</keyword>
<keyword id="KW-1185">Reference proteome</keyword>